<protein>
    <recommendedName>
        <fullName>Protein halfway</fullName>
    </recommendedName>
    <alternativeName>
        <fullName>Protein singed wings</fullName>
    </alternativeName>
</protein>
<name>HFW1_DROPS</name>
<dbReference type="EMBL" id="CH379063">
    <property type="protein sequence ID" value="EAL32483.2"/>
    <property type="molecule type" value="Genomic_DNA"/>
</dbReference>
<dbReference type="SMR" id="P84329"/>
<dbReference type="FunCoup" id="P84329">
    <property type="interactions" value="4"/>
</dbReference>
<dbReference type="STRING" id="46245.P84329"/>
<dbReference type="GlyCosmos" id="P84329">
    <property type="glycosylation" value="2 sites, No reported glycans"/>
</dbReference>
<dbReference type="eggNOG" id="KOG0619">
    <property type="taxonomic scope" value="Eukaryota"/>
</dbReference>
<dbReference type="HOGENOM" id="CLU_028059_2_0_1"/>
<dbReference type="InParanoid" id="P84329"/>
<dbReference type="OMA" id="RLQCDCN"/>
<dbReference type="Proteomes" id="UP000001819">
    <property type="component" value="Unplaced"/>
</dbReference>
<dbReference type="GO" id="GO:0035556">
    <property type="term" value="P:intracellular signal transduction"/>
    <property type="evidence" value="ECO:0000250"/>
    <property type="project" value="UniProtKB"/>
</dbReference>
<dbReference type="GO" id="GO:0035073">
    <property type="term" value="P:pupariation"/>
    <property type="evidence" value="ECO:0000250"/>
    <property type="project" value="UniProtKB"/>
</dbReference>
<dbReference type="GO" id="GO:0035075">
    <property type="term" value="P:response to ecdysone"/>
    <property type="evidence" value="ECO:0000250"/>
    <property type="project" value="UniProtKB"/>
</dbReference>
<dbReference type="FunFam" id="3.80.10.10:FF:000867">
    <property type="entry name" value="Blast:Protein halfway"/>
    <property type="match status" value="1"/>
</dbReference>
<dbReference type="FunFam" id="3.80.10.10:FF:001217">
    <property type="entry name" value="Protein halfway"/>
    <property type="match status" value="1"/>
</dbReference>
<dbReference type="Gene3D" id="3.80.10.10">
    <property type="entry name" value="Ribonuclease Inhibitor"/>
    <property type="match status" value="2"/>
</dbReference>
<dbReference type="InterPro" id="IPR001611">
    <property type="entry name" value="Leu-rich_rpt"/>
</dbReference>
<dbReference type="InterPro" id="IPR032675">
    <property type="entry name" value="LRR_dom_sf"/>
</dbReference>
<dbReference type="InterPro" id="IPR050333">
    <property type="entry name" value="SLRP"/>
</dbReference>
<dbReference type="PANTHER" id="PTHR45712">
    <property type="entry name" value="AGAP008170-PA"/>
    <property type="match status" value="1"/>
</dbReference>
<dbReference type="PANTHER" id="PTHR45712:SF22">
    <property type="entry name" value="INSULIN-LIKE GROWTH FACTOR-BINDING PROTEIN COMPLEX ACID LABILE SUBUNIT"/>
    <property type="match status" value="1"/>
</dbReference>
<dbReference type="Pfam" id="PF13855">
    <property type="entry name" value="LRR_8"/>
    <property type="match status" value="1"/>
</dbReference>
<dbReference type="SUPFAM" id="SSF52058">
    <property type="entry name" value="L domain-like"/>
    <property type="match status" value="1"/>
</dbReference>
<dbReference type="PROSITE" id="PS51450">
    <property type="entry name" value="LRR"/>
    <property type="match status" value="4"/>
</dbReference>
<feature type="chain" id="PRO_0000083962" description="Protein halfway">
    <location>
        <begin position="1"/>
        <end position="595"/>
    </location>
</feature>
<feature type="domain" description="LRRNT">
    <location>
        <begin position="347"/>
        <end position="402"/>
    </location>
</feature>
<feature type="repeat" description="LRR 1">
    <location>
        <begin position="403"/>
        <end position="424"/>
    </location>
</feature>
<feature type="repeat" description="LRR 2">
    <location>
        <begin position="429"/>
        <end position="450"/>
    </location>
</feature>
<feature type="repeat" description="LRR 3">
    <location>
        <begin position="454"/>
        <end position="475"/>
    </location>
</feature>
<feature type="domain" description="LRRCT">
    <location>
        <begin position="489"/>
        <end position="538"/>
    </location>
</feature>
<feature type="region of interest" description="Disordered" evidence="3">
    <location>
        <begin position="1"/>
        <end position="42"/>
    </location>
</feature>
<feature type="region of interest" description="Disordered" evidence="3">
    <location>
        <begin position="64"/>
        <end position="98"/>
    </location>
</feature>
<feature type="glycosylation site" description="N-linked (GlcNAc...) asparagine" evidence="2">
    <location>
        <position position="250"/>
    </location>
</feature>
<feature type="glycosylation site" description="N-linked (GlcNAc...) asparagine" evidence="2">
    <location>
        <position position="255"/>
    </location>
</feature>
<comment type="function">
    <text evidence="1">Has a role in the ecdysone induced cascade; probably indirect control of 'late' ecdysone genes.</text>
</comment>
<keyword id="KW-0325">Glycoprotein</keyword>
<keyword id="KW-0433">Leucine-rich repeat</keyword>
<keyword id="KW-1185">Reference proteome</keyword>
<keyword id="KW-0677">Repeat</keyword>
<sequence length="595" mass="66567">MLLTTGHARARPEQQQASADEPLEAKPEDGHSLTAPRPADDELATVAPTTTPVPAVAITQGATTGAATEATHSQPVVTAVPATSSTSTSTTVPAPLLPAAPEQPEYLKHCFYADEHLCMYGHDGQGNEAPDVLGHISTTPESDSQGIGLQVNASQGNSQNLERNANSCQCHEHPAKANSWYCCNISQMSMISSCSNISKWTNLHVRNLTVRTIDLSNPIFRSLQSLAVTDGNITRLINAFPRHSALKCLNISNNNISEIPSRMFKDVPHLEFFGMSRNNLSLVPHHNQNKNITVDISGNMRMLCNPLNEIINNDSFNFVNPKHSYCLYNATHEWFQSTDLVSVEQLESTKRCMTKCPVIPNYGSCKCRFESIMIIQDDQSKPKCHVDCSNLGLVELPPRLPDNTFVLNITNNKITSLGDHFQTNPTYHNINRLVADNNQISSIYEFEGTKFIENFQRIYMRNNSLSKIPEYFLNNALMDTGRRIYLAGNKLQCDCNSAKTLQNWLKERSTDIPDYMEIRCRNIPQSVIELQEAKLCQSPPDWTDYIYYLIAAEVILLLGLITKVSYDYWVFKTSGYLPWPASKMPKLPCDWLCES</sequence>
<gene>
    <name type="primary">hfw</name>
    <name type="ORF">GA15922</name>
</gene>
<organism>
    <name type="scientific">Drosophila pseudoobscura pseudoobscura</name>
    <name type="common">Fruit fly</name>
    <dbReference type="NCBI Taxonomy" id="46245"/>
    <lineage>
        <taxon>Eukaryota</taxon>
        <taxon>Metazoa</taxon>
        <taxon>Ecdysozoa</taxon>
        <taxon>Arthropoda</taxon>
        <taxon>Hexapoda</taxon>
        <taxon>Insecta</taxon>
        <taxon>Pterygota</taxon>
        <taxon>Neoptera</taxon>
        <taxon>Endopterygota</taxon>
        <taxon>Diptera</taxon>
        <taxon>Brachycera</taxon>
        <taxon>Muscomorpha</taxon>
        <taxon>Ephydroidea</taxon>
        <taxon>Drosophilidae</taxon>
        <taxon>Drosophila</taxon>
        <taxon>Sophophora</taxon>
    </lineage>
</organism>
<evidence type="ECO:0000250" key="1">
    <source>
        <dbReference type="UniProtKB" id="Q9W568"/>
    </source>
</evidence>
<evidence type="ECO:0000255" key="2"/>
<evidence type="ECO:0000256" key="3">
    <source>
        <dbReference type="SAM" id="MobiDB-lite"/>
    </source>
</evidence>
<evidence type="ECO:0000305" key="4"/>
<proteinExistence type="inferred from homology"/>
<accession>P84329</accession>
<accession>Q29J19</accession>
<reference key="1">
    <citation type="journal article" date="2005" name="Genome Res.">
        <title>Comparative genome sequencing of Drosophila pseudoobscura: chromosomal, gene, and cis-element evolution.</title>
        <authorList>
            <person name="Richards S."/>
            <person name="Liu Y."/>
            <person name="Bettencourt B.R."/>
            <person name="Hradecky P."/>
            <person name="Letovsky S."/>
            <person name="Nielsen R."/>
            <person name="Thornton K."/>
            <person name="Hubisz M.J."/>
            <person name="Chen R."/>
            <person name="Meisel R.P."/>
            <person name="Couronne O."/>
            <person name="Hua S."/>
            <person name="Smith M.A."/>
            <person name="Zhang P."/>
            <person name="Liu J."/>
            <person name="Bussemaker H.J."/>
            <person name="van Batenburg M.F."/>
            <person name="Howells S.L."/>
            <person name="Scherer S.E."/>
            <person name="Sodergren E."/>
            <person name="Matthews B.B."/>
            <person name="Crosby M.A."/>
            <person name="Schroeder A.J."/>
            <person name="Ortiz-Barrientos D."/>
            <person name="Rives C.M."/>
            <person name="Metzker M.L."/>
            <person name="Muzny D.M."/>
            <person name="Scott G."/>
            <person name="Steffen D."/>
            <person name="Wheeler D.A."/>
            <person name="Worley K.C."/>
            <person name="Havlak P."/>
            <person name="Durbin K.J."/>
            <person name="Egan A."/>
            <person name="Gill R."/>
            <person name="Hume J."/>
            <person name="Morgan M.B."/>
            <person name="Miner G."/>
            <person name="Hamilton C."/>
            <person name="Huang Y."/>
            <person name="Waldron L."/>
            <person name="Verduzco D."/>
            <person name="Clerc-Blankenburg K.P."/>
            <person name="Dubchak I."/>
            <person name="Noor M.A.F."/>
            <person name="Anderson W."/>
            <person name="White K.P."/>
            <person name="Clark A.G."/>
            <person name="Schaeffer S.W."/>
            <person name="Gelbart W.M."/>
            <person name="Weinstock G.M."/>
            <person name="Gibbs R.A."/>
        </authorList>
    </citation>
    <scope>NUCLEOTIDE SEQUENCE [LARGE SCALE GENOMIC DNA]</scope>
    <source>
        <strain>MV2-25 / Tucson 14011-0121.94</strain>
    </source>
</reference>
<reference evidence="4" key="2">
    <citation type="journal article" date="2004" name="BMC Genet.">
        <title>Molecular characterization of the singed wings locus of Drosophila melanogaster.</title>
        <authorList>
            <person name="Schwartz Y.B."/>
            <person name="Boykova T."/>
            <person name="Belyaeva E.S."/>
            <person name="Ashburner M."/>
            <person name="Zhimulev I.F."/>
        </authorList>
    </citation>
    <scope>IDENTIFICATION</scope>
</reference>